<protein>
    <recommendedName>
        <fullName>MAP kinase kinase MKK2/SSP33</fullName>
        <ecNumber>2.7.12.2</ecNumber>
    </recommendedName>
</protein>
<proteinExistence type="evidence at protein level"/>
<feature type="chain" id="PRO_0000086333" description="MAP kinase kinase MKK2/SSP33">
    <location>
        <begin position="1"/>
        <end position="506"/>
    </location>
</feature>
<feature type="domain" description="Protein kinase" evidence="1">
    <location>
        <begin position="214"/>
        <end position="481"/>
    </location>
</feature>
<feature type="region of interest" description="Disordered" evidence="3">
    <location>
        <begin position="1"/>
        <end position="69"/>
    </location>
</feature>
<feature type="compositionally biased region" description="Polar residues" evidence="3">
    <location>
        <begin position="26"/>
        <end position="52"/>
    </location>
</feature>
<feature type="compositionally biased region" description="Low complexity" evidence="3">
    <location>
        <begin position="53"/>
        <end position="69"/>
    </location>
</feature>
<feature type="active site" description="Proton acceptor" evidence="1 2">
    <location>
        <position position="342"/>
    </location>
</feature>
<feature type="binding site" evidence="1">
    <location>
        <begin position="220"/>
        <end position="228"/>
    </location>
    <ligand>
        <name>ATP</name>
        <dbReference type="ChEBI" id="CHEBI:30616"/>
    </ligand>
</feature>
<feature type="binding site" evidence="1">
    <location>
        <position position="243"/>
    </location>
    <ligand>
        <name>ATP</name>
        <dbReference type="ChEBI" id="CHEBI:30616"/>
    </ligand>
</feature>
<feature type="sequence conflict" description="In Ref. 1; BAA02933." evidence="5" ref="1">
    <original>P</original>
    <variation>S</variation>
    <location>
        <position position="252"/>
    </location>
</feature>
<dbReference type="EC" id="2.7.12.2"/>
<dbReference type="EMBL" id="D13785">
    <property type="protein sequence ID" value="BAA02933.1"/>
    <property type="molecule type" value="Genomic_DNA"/>
</dbReference>
<dbReference type="EMBL" id="U43703">
    <property type="protein sequence ID" value="AAB68220.1"/>
    <property type="molecule type" value="Genomic_DNA"/>
</dbReference>
<dbReference type="EMBL" id="U10280">
    <property type="protein sequence ID" value="AAB40938.1"/>
    <property type="molecule type" value="Genomic_DNA"/>
</dbReference>
<dbReference type="EMBL" id="BK006949">
    <property type="protein sequence ID" value="DAA11294.1"/>
    <property type="molecule type" value="Genomic_DNA"/>
</dbReference>
<dbReference type="PIR" id="S69045">
    <property type="entry name" value="S69045"/>
</dbReference>
<dbReference type="RefSeq" id="NP_015185.1">
    <property type="nucleotide sequence ID" value="NM_001183954.1"/>
</dbReference>
<dbReference type="SMR" id="P32491"/>
<dbReference type="BioGRID" id="36042">
    <property type="interactions" value="150"/>
</dbReference>
<dbReference type="DIP" id="DIP-1447N"/>
<dbReference type="FunCoup" id="P32491">
    <property type="interactions" value="742"/>
</dbReference>
<dbReference type="IntAct" id="P32491">
    <property type="interactions" value="53"/>
</dbReference>
<dbReference type="MINT" id="P32491"/>
<dbReference type="STRING" id="4932.YPL140C"/>
<dbReference type="iPTMnet" id="P32491"/>
<dbReference type="PaxDb" id="4932-YPL140C"/>
<dbReference type="PeptideAtlas" id="P32491"/>
<dbReference type="EnsemblFungi" id="YPL140C_mRNA">
    <property type="protein sequence ID" value="YPL140C"/>
    <property type="gene ID" value="YPL140C"/>
</dbReference>
<dbReference type="GeneID" id="855963"/>
<dbReference type="KEGG" id="sce:YPL140C"/>
<dbReference type="AGR" id="SGD:S000006061"/>
<dbReference type="SGD" id="S000006061">
    <property type="gene designation" value="MKK2"/>
</dbReference>
<dbReference type="VEuPathDB" id="FungiDB:YPL140C"/>
<dbReference type="eggNOG" id="KOG0581">
    <property type="taxonomic scope" value="Eukaryota"/>
</dbReference>
<dbReference type="GeneTree" id="ENSGT00940000176752"/>
<dbReference type="HOGENOM" id="CLU_000288_63_23_1"/>
<dbReference type="InParanoid" id="P32491"/>
<dbReference type="OMA" id="MFRPPES"/>
<dbReference type="OrthoDB" id="10252354at2759"/>
<dbReference type="BioCyc" id="YEAST:G3O-34038-MONOMER"/>
<dbReference type="BRENDA" id="2.7.12.2">
    <property type="organism ID" value="984"/>
</dbReference>
<dbReference type="Reactome" id="R-SCE-112411">
    <property type="pathway name" value="MAPK1 (ERK2) activation"/>
</dbReference>
<dbReference type="Reactome" id="R-SCE-445144">
    <property type="pathway name" value="Signal transduction by L1"/>
</dbReference>
<dbReference type="Reactome" id="R-SCE-5674135">
    <property type="pathway name" value="MAP2K and MAPK activation"/>
</dbReference>
<dbReference type="Reactome" id="R-SCE-5674499">
    <property type="pathway name" value="Negative feedback regulation of MAPK pathway"/>
</dbReference>
<dbReference type="BioGRID-ORCS" id="855963">
    <property type="hits" value="0 hits in 13 CRISPR screens"/>
</dbReference>
<dbReference type="PRO" id="PR:P32491"/>
<dbReference type="Proteomes" id="UP000002311">
    <property type="component" value="Chromosome XVI"/>
</dbReference>
<dbReference type="RNAct" id="P32491">
    <property type="molecule type" value="protein"/>
</dbReference>
<dbReference type="GO" id="GO:0005935">
    <property type="term" value="C:cellular bud neck"/>
    <property type="evidence" value="ECO:0000314"/>
    <property type="project" value="SGD"/>
</dbReference>
<dbReference type="GO" id="GO:0005934">
    <property type="term" value="C:cellular bud tip"/>
    <property type="evidence" value="ECO:0000314"/>
    <property type="project" value="SGD"/>
</dbReference>
<dbReference type="GO" id="GO:0005737">
    <property type="term" value="C:cytoplasm"/>
    <property type="evidence" value="ECO:0000314"/>
    <property type="project" value="SGD"/>
</dbReference>
<dbReference type="GO" id="GO:0005829">
    <property type="term" value="C:cytosol"/>
    <property type="evidence" value="ECO:0007005"/>
    <property type="project" value="SGD"/>
</dbReference>
<dbReference type="GO" id="GO:0043332">
    <property type="term" value="C:mating projection tip"/>
    <property type="evidence" value="ECO:0000314"/>
    <property type="project" value="SGD"/>
</dbReference>
<dbReference type="GO" id="GO:0005524">
    <property type="term" value="F:ATP binding"/>
    <property type="evidence" value="ECO:0007669"/>
    <property type="project" value="UniProtKB-KW"/>
</dbReference>
<dbReference type="GO" id="GO:0004708">
    <property type="term" value="F:MAP kinase kinase activity"/>
    <property type="evidence" value="ECO:0000250"/>
    <property type="project" value="SGD"/>
</dbReference>
<dbReference type="GO" id="GO:0106310">
    <property type="term" value="F:protein serine kinase activity"/>
    <property type="evidence" value="ECO:0007669"/>
    <property type="project" value="RHEA"/>
</dbReference>
<dbReference type="GO" id="GO:0004674">
    <property type="term" value="F:protein serine/threonine kinase activity"/>
    <property type="evidence" value="ECO:0007669"/>
    <property type="project" value="UniProtKB-KW"/>
</dbReference>
<dbReference type="GO" id="GO:0004713">
    <property type="term" value="F:protein tyrosine kinase activity"/>
    <property type="evidence" value="ECO:0007669"/>
    <property type="project" value="UniProtKB-KW"/>
</dbReference>
<dbReference type="GO" id="GO:0000196">
    <property type="term" value="P:cell integrity MAPK cascade"/>
    <property type="evidence" value="ECO:0000316"/>
    <property type="project" value="SGD"/>
</dbReference>
<dbReference type="GO" id="GO:0000425">
    <property type="term" value="P:pexophagy"/>
    <property type="evidence" value="ECO:0000316"/>
    <property type="project" value="SGD"/>
</dbReference>
<dbReference type="GO" id="GO:0060237">
    <property type="term" value="P:regulation of fungal-type cell wall organization"/>
    <property type="evidence" value="ECO:0000316"/>
    <property type="project" value="SGD"/>
</dbReference>
<dbReference type="GO" id="GO:0007165">
    <property type="term" value="P:signal transduction"/>
    <property type="evidence" value="ECO:0000315"/>
    <property type="project" value="SGD"/>
</dbReference>
<dbReference type="CDD" id="cd06621">
    <property type="entry name" value="PKc_Pek1_like"/>
    <property type="match status" value="1"/>
</dbReference>
<dbReference type="FunFam" id="3.30.200.20:FF:000294">
    <property type="entry name" value="Map kinase kinase"/>
    <property type="match status" value="1"/>
</dbReference>
<dbReference type="FunFam" id="1.10.510.10:FF:000263">
    <property type="entry name" value="MAP kinase skh1/pek1"/>
    <property type="match status" value="1"/>
</dbReference>
<dbReference type="Gene3D" id="3.30.200.20">
    <property type="entry name" value="Phosphorylase Kinase, domain 1"/>
    <property type="match status" value="1"/>
</dbReference>
<dbReference type="Gene3D" id="1.10.510.10">
    <property type="entry name" value="Transferase(Phosphotransferase) domain 1"/>
    <property type="match status" value="1"/>
</dbReference>
<dbReference type="InterPro" id="IPR011009">
    <property type="entry name" value="Kinase-like_dom_sf"/>
</dbReference>
<dbReference type="InterPro" id="IPR000719">
    <property type="entry name" value="Prot_kinase_dom"/>
</dbReference>
<dbReference type="InterPro" id="IPR017441">
    <property type="entry name" value="Protein_kinase_ATP_BS"/>
</dbReference>
<dbReference type="InterPro" id="IPR008271">
    <property type="entry name" value="Ser/Thr_kinase_AS"/>
</dbReference>
<dbReference type="PANTHER" id="PTHR48013">
    <property type="entry name" value="DUAL SPECIFICITY MITOGEN-ACTIVATED PROTEIN KINASE KINASE 5-RELATED"/>
    <property type="match status" value="1"/>
</dbReference>
<dbReference type="PANTHER" id="PTHR48013:SF6">
    <property type="entry name" value="MAP KINASE KINASE MKK1_SSP32-RELATED"/>
    <property type="match status" value="1"/>
</dbReference>
<dbReference type="Pfam" id="PF00069">
    <property type="entry name" value="Pkinase"/>
    <property type="match status" value="1"/>
</dbReference>
<dbReference type="SMART" id="SM00220">
    <property type="entry name" value="S_TKc"/>
    <property type="match status" value="1"/>
</dbReference>
<dbReference type="SUPFAM" id="SSF56112">
    <property type="entry name" value="Protein kinase-like (PK-like)"/>
    <property type="match status" value="1"/>
</dbReference>
<dbReference type="PROSITE" id="PS00107">
    <property type="entry name" value="PROTEIN_KINASE_ATP"/>
    <property type="match status" value="1"/>
</dbReference>
<dbReference type="PROSITE" id="PS50011">
    <property type="entry name" value="PROTEIN_KINASE_DOM"/>
    <property type="match status" value="1"/>
</dbReference>
<dbReference type="PROSITE" id="PS00108">
    <property type="entry name" value="PROTEIN_KINASE_ST"/>
    <property type="match status" value="1"/>
</dbReference>
<sequence length="506" mass="56758">MASMFRPPESNRSHQKTPKLTLPVNLVQNAKSTNDGQHLNRSPYSSVNESPYSNNSTSATSTTSSMASNSTLLYNRSSTTTIKNRPVPPPLPPLVLTQKKDGIEYRVAGDSQLSERFSNLHVDITYKELLSSAPISTKLSNIDTTFIKKDLDTPEGEDSYPSTLLSAYDFSSSGSNSAPLSANNIISCSNLIQGKDVDQLEEEAWRFGHLKDEITTLGILGEGAGGSVAKCRLKNGKKVFALKTINTMNTDPEYQKQIFRELQFNKSFKSDYIVQYYGMFTDEQSSSIYIAMEYMGGKSLEATYKNLLKRGGRISERVIGKIAESVLRGLSYLHERKVIHRDIKPQNILLNEKGEIKLCDFGVSGEAVNSLAMTFTGTSFYMAPERIQGQPYSVTCDVWSLGLTLLEVAGGRFPFESDKITQNVAPIELLTMILTFSPQLKDEPELDISWSKTFRSFIDYCLKKDARERPSPRQMLKHPWIVGQMKKKVNMERFVKKCWEKEKDGI</sequence>
<accession>P32491</accession>
<accession>D6W3M8</accession>
<comment type="function">
    <text>Serine/threonine protein kinase involved in a signal transduction pathway that plays a role in yeast cell morphogenesis and cell growth. This pathway seems to start by SMP3; then involves the kinase PKC1 that may act on the BCK1 kinase that then phosphorylates MKK1 and MKK2 which themselves phosphorylate the MPK1 kinase.</text>
</comment>
<comment type="catalytic activity">
    <reaction>
        <text>L-seryl-[protein] + ATP = O-phospho-L-seryl-[protein] + ADP + H(+)</text>
        <dbReference type="Rhea" id="RHEA:17989"/>
        <dbReference type="Rhea" id="RHEA-COMP:9863"/>
        <dbReference type="Rhea" id="RHEA-COMP:11604"/>
        <dbReference type="ChEBI" id="CHEBI:15378"/>
        <dbReference type="ChEBI" id="CHEBI:29999"/>
        <dbReference type="ChEBI" id="CHEBI:30616"/>
        <dbReference type="ChEBI" id="CHEBI:83421"/>
        <dbReference type="ChEBI" id="CHEBI:456216"/>
        <dbReference type="EC" id="2.7.12.2"/>
    </reaction>
</comment>
<comment type="catalytic activity">
    <reaction>
        <text>L-threonyl-[protein] + ATP = O-phospho-L-threonyl-[protein] + ADP + H(+)</text>
        <dbReference type="Rhea" id="RHEA:46608"/>
        <dbReference type="Rhea" id="RHEA-COMP:11060"/>
        <dbReference type="Rhea" id="RHEA-COMP:11605"/>
        <dbReference type="ChEBI" id="CHEBI:15378"/>
        <dbReference type="ChEBI" id="CHEBI:30013"/>
        <dbReference type="ChEBI" id="CHEBI:30616"/>
        <dbReference type="ChEBI" id="CHEBI:61977"/>
        <dbReference type="ChEBI" id="CHEBI:456216"/>
        <dbReference type="EC" id="2.7.12.2"/>
    </reaction>
</comment>
<comment type="catalytic activity">
    <reaction>
        <text>L-tyrosyl-[protein] + ATP = O-phospho-L-tyrosyl-[protein] + ADP + H(+)</text>
        <dbReference type="Rhea" id="RHEA:10596"/>
        <dbReference type="Rhea" id="RHEA-COMP:10136"/>
        <dbReference type="Rhea" id="RHEA-COMP:20101"/>
        <dbReference type="ChEBI" id="CHEBI:15378"/>
        <dbReference type="ChEBI" id="CHEBI:30616"/>
        <dbReference type="ChEBI" id="CHEBI:46858"/>
        <dbReference type="ChEBI" id="CHEBI:61978"/>
        <dbReference type="ChEBI" id="CHEBI:456216"/>
        <dbReference type="EC" id="2.7.12.2"/>
    </reaction>
</comment>
<comment type="interaction">
    <interactant intactId="EBI-10973">
        <id>P32491</id>
    </interactant>
    <interactant intactId="EBI-17372">
        <id>Q00772</id>
        <label>SLT2</label>
    </interactant>
    <organismsDiffer>false</organismsDiffer>
    <experiments>5</experiments>
</comment>
<comment type="miscellaneous">
    <text evidence="4">Present with 1950 molecules/cell in log phase SD medium.</text>
</comment>
<comment type="similarity">
    <text evidence="5">Belongs to the protein kinase superfamily. STE Ser/Thr protein kinase family. MAP kinase kinase subfamily.</text>
</comment>
<organism>
    <name type="scientific">Saccharomyces cerevisiae (strain ATCC 204508 / S288c)</name>
    <name type="common">Baker's yeast</name>
    <dbReference type="NCBI Taxonomy" id="559292"/>
    <lineage>
        <taxon>Eukaryota</taxon>
        <taxon>Fungi</taxon>
        <taxon>Dikarya</taxon>
        <taxon>Ascomycota</taxon>
        <taxon>Saccharomycotina</taxon>
        <taxon>Saccharomycetes</taxon>
        <taxon>Saccharomycetales</taxon>
        <taxon>Saccharomycetaceae</taxon>
        <taxon>Saccharomyces</taxon>
    </lineage>
</organism>
<reference key="1">
    <citation type="journal article" date="1993" name="Mol. Cell. Biol.">
        <title>MKK1 and MKK2, which encode Saccharomyces cerevisiae mitogen-activated protein kinase-kinase homologs, function in the pathway mediated by protein kinase C.</title>
        <authorList>
            <person name="Irie K."/>
            <person name="Takase M."/>
            <person name="Lee K.S."/>
            <person name="Levin D.E."/>
            <person name="Araki H."/>
            <person name="Matsumoto K."/>
            <person name="Oshima Y."/>
        </authorList>
    </citation>
    <scope>NUCLEOTIDE SEQUENCE [GENOMIC DNA]</scope>
</reference>
<reference key="2">
    <citation type="journal article" date="1997" name="Nature">
        <title>The nucleotide sequence of Saccharomyces cerevisiae chromosome XVI.</title>
        <authorList>
            <person name="Bussey H."/>
            <person name="Storms R.K."/>
            <person name="Ahmed A."/>
            <person name="Albermann K."/>
            <person name="Allen E."/>
            <person name="Ansorge W."/>
            <person name="Araujo R."/>
            <person name="Aparicio A."/>
            <person name="Barrell B.G."/>
            <person name="Badcock K."/>
            <person name="Benes V."/>
            <person name="Botstein D."/>
            <person name="Bowman S."/>
            <person name="Brueckner M."/>
            <person name="Carpenter J."/>
            <person name="Cherry J.M."/>
            <person name="Chung E."/>
            <person name="Churcher C.M."/>
            <person name="Coster F."/>
            <person name="Davis K."/>
            <person name="Davis R.W."/>
            <person name="Dietrich F.S."/>
            <person name="Delius H."/>
            <person name="DiPaolo T."/>
            <person name="Dubois E."/>
            <person name="Duesterhoeft A."/>
            <person name="Duncan M."/>
            <person name="Floeth M."/>
            <person name="Fortin N."/>
            <person name="Friesen J.D."/>
            <person name="Fritz C."/>
            <person name="Goffeau A."/>
            <person name="Hall J."/>
            <person name="Hebling U."/>
            <person name="Heumann K."/>
            <person name="Hilbert H."/>
            <person name="Hillier L.W."/>
            <person name="Hunicke-Smith S."/>
            <person name="Hyman R.W."/>
            <person name="Johnston M."/>
            <person name="Kalman S."/>
            <person name="Kleine K."/>
            <person name="Komp C."/>
            <person name="Kurdi O."/>
            <person name="Lashkari D."/>
            <person name="Lew H."/>
            <person name="Lin A."/>
            <person name="Lin D."/>
            <person name="Louis E.J."/>
            <person name="Marathe R."/>
            <person name="Messenguy F."/>
            <person name="Mewes H.-W."/>
            <person name="Mirtipati S."/>
            <person name="Moestl D."/>
            <person name="Mueller-Auer S."/>
            <person name="Namath A."/>
            <person name="Nentwich U."/>
            <person name="Oefner P."/>
            <person name="Pearson D."/>
            <person name="Petel F.X."/>
            <person name="Pohl T.M."/>
            <person name="Purnelle B."/>
            <person name="Rajandream M.A."/>
            <person name="Rechmann S."/>
            <person name="Rieger M."/>
            <person name="Riles L."/>
            <person name="Roberts D."/>
            <person name="Schaefer M."/>
            <person name="Scharfe M."/>
            <person name="Scherens B."/>
            <person name="Schramm S."/>
            <person name="Schroeder M."/>
            <person name="Sdicu A.-M."/>
            <person name="Tettelin H."/>
            <person name="Urrestarazu L.A."/>
            <person name="Ushinsky S."/>
            <person name="Vierendeels F."/>
            <person name="Vissers S."/>
            <person name="Voss H."/>
            <person name="Walsh S.V."/>
            <person name="Wambutt R."/>
            <person name="Wang Y."/>
            <person name="Wedler E."/>
            <person name="Wedler H."/>
            <person name="Winnett E."/>
            <person name="Zhong W.-W."/>
            <person name="Zollner A."/>
            <person name="Vo D.H."/>
            <person name="Hani J."/>
        </authorList>
    </citation>
    <scope>NUCLEOTIDE SEQUENCE [LARGE SCALE GENOMIC DNA]</scope>
    <source>
        <strain>ATCC 204508 / S288c</strain>
    </source>
</reference>
<reference key="3">
    <citation type="journal article" date="2014" name="G3 (Bethesda)">
        <title>The reference genome sequence of Saccharomyces cerevisiae: Then and now.</title>
        <authorList>
            <person name="Engel S.R."/>
            <person name="Dietrich F.S."/>
            <person name="Fisk D.G."/>
            <person name="Binkley G."/>
            <person name="Balakrishnan R."/>
            <person name="Costanzo M.C."/>
            <person name="Dwight S.S."/>
            <person name="Hitz B.C."/>
            <person name="Karra K."/>
            <person name="Nash R.S."/>
            <person name="Weng S."/>
            <person name="Wong E.D."/>
            <person name="Lloyd P."/>
            <person name="Skrzypek M.S."/>
            <person name="Miyasato S.R."/>
            <person name="Simison M."/>
            <person name="Cherry J.M."/>
        </authorList>
    </citation>
    <scope>GENOME REANNOTATION</scope>
    <source>
        <strain>ATCC 204508 / S288c</strain>
    </source>
</reference>
<reference key="4">
    <citation type="submission" date="1997-01" db="EMBL/GenBank/DDBJ databases">
        <authorList>
            <person name="Mallory M.J."/>
            <person name="Strich R."/>
        </authorList>
    </citation>
    <scope>NUCLEOTIDE SEQUENCE [GENOMIC DNA] OF 1-88</scope>
    <source>
        <strain>ATCC 204626 / S288c / A364A</strain>
    </source>
</reference>
<reference key="5">
    <citation type="journal article" date="2003" name="Nature">
        <title>Global analysis of protein expression in yeast.</title>
        <authorList>
            <person name="Ghaemmaghami S."/>
            <person name="Huh W.-K."/>
            <person name="Bower K."/>
            <person name="Howson R.W."/>
            <person name="Belle A."/>
            <person name="Dephoure N."/>
            <person name="O'Shea E.K."/>
            <person name="Weissman J.S."/>
        </authorList>
    </citation>
    <scope>LEVEL OF PROTEIN EXPRESSION [LARGE SCALE ANALYSIS]</scope>
</reference>
<name>MKK2_YEAST</name>
<keyword id="KW-0067">ATP-binding</keyword>
<keyword id="KW-0418">Kinase</keyword>
<keyword id="KW-0547">Nucleotide-binding</keyword>
<keyword id="KW-1185">Reference proteome</keyword>
<keyword id="KW-0723">Serine/threonine-protein kinase</keyword>
<keyword id="KW-0808">Transferase</keyword>
<keyword id="KW-0829">Tyrosine-protein kinase</keyword>
<evidence type="ECO:0000255" key="1">
    <source>
        <dbReference type="PROSITE-ProRule" id="PRU00159"/>
    </source>
</evidence>
<evidence type="ECO:0000255" key="2">
    <source>
        <dbReference type="PROSITE-ProRule" id="PRU10027"/>
    </source>
</evidence>
<evidence type="ECO:0000256" key="3">
    <source>
        <dbReference type="SAM" id="MobiDB-lite"/>
    </source>
</evidence>
<evidence type="ECO:0000269" key="4">
    <source>
    </source>
</evidence>
<evidence type="ECO:0000305" key="5"/>
<gene>
    <name type="primary">MKK2</name>
    <name type="synonym">SSP33</name>
    <name type="ordered locus">YPL140C</name>
    <name type="ORF">LPI6C</name>
</gene>